<accession>Q83IB6</accession>
<evidence type="ECO:0000255" key="1">
    <source>
        <dbReference type="HAMAP-Rule" id="MF_00373"/>
    </source>
</evidence>
<evidence type="ECO:0000305" key="2"/>
<protein>
    <recommendedName>
        <fullName evidence="1">Large ribosomal subunit protein bL28</fullName>
    </recommendedName>
    <alternativeName>
        <fullName evidence="2">50S ribosomal protein L28</fullName>
    </alternativeName>
</protein>
<comment type="similarity">
    <text evidence="1">Belongs to the bacterial ribosomal protein bL28 family.</text>
</comment>
<proteinExistence type="inferred from homology"/>
<feature type="chain" id="PRO_0000178581" description="Large ribosomal subunit protein bL28">
    <location>
        <begin position="1"/>
        <end position="78"/>
    </location>
</feature>
<keyword id="KW-0687">Ribonucleoprotein</keyword>
<keyword id="KW-0689">Ribosomal protein</keyword>
<reference key="1">
    <citation type="journal article" date="2003" name="Lancet">
        <title>Sequencing and analysis of the genome of the Whipple's disease bacterium Tropheryma whipplei.</title>
        <authorList>
            <person name="Bentley S.D."/>
            <person name="Maiwald M."/>
            <person name="Murphy L.D."/>
            <person name="Pallen M.J."/>
            <person name="Yeats C.A."/>
            <person name="Dover L.G."/>
            <person name="Norbertczak H.T."/>
            <person name="Besra G.S."/>
            <person name="Quail M.A."/>
            <person name="Harris D.E."/>
            <person name="von Herbay A."/>
            <person name="Goble A."/>
            <person name="Rutter S."/>
            <person name="Squares R."/>
            <person name="Squares S."/>
            <person name="Barrell B.G."/>
            <person name="Parkhill J."/>
            <person name="Relman D.A."/>
        </authorList>
    </citation>
    <scope>NUCLEOTIDE SEQUENCE [LARGE SCALE GENOMIC DNA]</scope>
    <source>
        <strain>TW08/27</strain>
    </source>
</reference>
<sequence length="78" mass="8769">MSSVCQVTGASPGFGYAVSHSHRRTKRRFDPNVRRRTFYVATLGRRVTLNVSVKGLRLIDKRGIDAVVRDLIKKGVKL</sequence>
<dbReference type="EMBL" id="BX251410">
    <property type="protein sequence ID" value="CAD66805.1"/>
    <property type="molecule type" value="Genomic_DNA"/>
</dbReference>
<dbReference type="RefSeq" id="WP_011096086.1">
    <property type="nucleotide sequence ID" value="NC_004551.1"/>
</dbReference>
<dbReference type="SMR" id="Q83IB6"/>
<dbReference type="GeneID" id="67387897"/>
<dbReference type="KEGG" id="tws:TW125"/>
<dbReference type="HOGENOM" id="CLU_064548_3_1_11"/>
<dbReference type="GO" id="GO:1990904">
    <property type="term" value="C:ribonucleoprotein complex"/>
    <property type="evidence" value="ECO:0007669"/>
    <property type="project" value="UniProtKB-KW"/>
</dbReference>
<dbReference type="GO" id="GO:0005840">
    <property type="term" value="C:ribosome"/>
    <property type="evidence" value="ECO:0007669"/>
    <property type="project" value="UniProtKB-KW"/>
</dbReference>
<dbReference type="GO" id="GO:0003735">
    <property type="term" value="F:structural constituent of ribosome"/>
    <property type="evidence" value="ECO:0007669"/>
    <property type="project" value="InterPro"/>
</dbReference>
<dbReference type="GO" id="GO:0006412">
    <property type="term" value="P:translation"/>
    <property type="evidence" value="ECO:0007669"/>
    <property type="project" value="UniProtKB-UniRule"/>
</dbReference>
<dbReference type="FunFam" id="2.30.170.40:FF:000001">
    <property type="entry name" value="50S ribosomal protein L28"/>
    <property type="match status" value="1"/>
</dbReference>
<dbReference type="Gene3D" id="2.30.170.40">
    <property type="entry name" value="Ribosomal protein L28/L24"/>
    <property type="match status" value="1"/>
</dbReference>
<dbReference type="HAMAP" id="MF_00373">
    <property type="entry name" value="Ribosomal_bL28"/>
    <property type="match status" value="1"/>
</dbReference>
<dbReference type="InterPro" id="IPR026569">
    <property type="entry name" value="Ribosomal_bL28"/>
</dbReference>
<dbReference type="InterPro" id="IPR034704">
    <property type="entry name" value="Ribosomal_bL28/bL31-like_sf"/>
</dbReference>
<dbReference type="InterPro" id="IPR001383">
    <property type="entry name" value="Ribosomal_bL28_bact-type"/>
</dbReference>
<dbReference type="InterPro" id="IPR037147">
    <property type="entry name" value="Ribosomal_bL28_sf"/>
</dbReference>
<dbReference type="NCBIfam" id="TIGR00009">
    <property type="entry name" value="L28"/>
    <property type="match status" value="1"/>
</dbReference>
<dbReference type="PANTHER" id="PTHR13528">
    <property type="entry name" value="39S RIBOSOMAL PROTEIN L28, MITOCHONDRIAL"/>
    <property type="match status" value="1"/>
</dbReference>
<dbReference type="PANTHER" id="PTHR13528:SF2">
    <property type="entry name" value="LARGE RIBOSOMAL SUBUNIT PROTEIN BL28M"/>
    <property type="match status" value="1"/>
</dbReference>
<dbReference type="Pfam" id="PF00830">
    <property type="entry name" value="Ribosomal_L28"/>
    <property type="match status" value="1"/>
</dbReference>
<dbReference type="SUPFAM" id="SSF143800">
    <property type="entry name" value="L28p-like"/>
    <property type="match status" value="1"/>
</dbReference>
<gene>
    <name evidence="1" type="primary">rpmB</name>
    <name type="ordered locus">TW125</name>
</gene>
<organism>
    <name type="scientific">Tropheryma whipplei (strain TW08/27)</name>
    <name type="common">Whipple's bacillus</name>
    <dbReference type="NCBI Taxonomy" id="218496"/>
    <lineage>
        <taxon>Bacteria</taxon>
        <taxon>Bacillati</taxon>
        <taxon>Actinomycetota</taxon>
        <taxon>Actinomycetes</taxon>
        <taxon>Micrococcales</taxon>
        <taxon>Tropherymataceae</taxon>
        <taxon>Tropheryma</taxon>
    </lineage>
</organism>
<name>RL28_TROW8</name>